<comment type="function">
    <text evidence="1">Has an important function as a repair enzyme for proteins that have been inactivated by oxidation. Catalyzes the reversible oxidation-reduction of methionine sulfoxide in proteins to methionine.</text>
</comment>
<comment type="catalytic activity">
    <reaction evidence="1">
        <text>L-methionyl-[protein] + [thioredoxin]-disulfide + H2O = L-methionyl-(S)-S-oxide-[protein] + [thioredoxin]-dithiol</text>
        <dbReference type="Rhea" id="RHEA:14217"/>
        <dbReference type="Rhea" id="RHEA-COMP:10698"/>
        <dbReference type="Rhea" id="RHEA-COMP:10700"/>
        <dbReference type="Rhea" id="RHEA-COMP:12313"/>
        <dbReference type="Rhea" id="RHEA-COMP:12315"/>
        <dbReference type="ChEBI" id="CHEBI:15377"/>
        <dbReference type="ChEBI" id="CHEBI:16044"/>
        <dbReference type="ChEBI" id="CHEBI:29950"/>
        <dbReference type="ChEBI" id="CHEBI:44120"/>
        <dbReference type="ChEBI" id="CHEBI:50058"/>
        <dbReference type="EC" id="1.8.4.11"/>
    </reaction>
</comment>
<comment type="catalytic activity">
    <reaction evidence="1">
        <text>[thioredoxin]-disulfide + L-methionine + H2O = L-methionine (S)-S-oxide + [thioredoxin]-dithiol</text>
        <dbReference type="Rhea" id="RHEA:19993"/>
        <dbReference type="Rhea" id="RHEA-COMP:10698"/>
        <dbReference type="Rhea" id="RHEA-COMP:10700"/>
        <dbReference type="ChEBI" id="CHEBI:15377"/>
        <dbReference type="ChEBI" id="CHEBI:29950"/>
        <dbReference type="ChEBI" id="CHEBI:50058"/>
        <dbReference type="ChEBI" id="CHEBI:57844"/>
        <dbReference type="ChEBI" id="CHEBI:58772"/>
        <dbReference type="EC" id="1.8.4.11"/>
    </reaction>
</comment>
<comment type="similarity">
    <text evidence="1">Belongs to the MsrA Met sulfoxide reductase family.</text>
</comment>
<proteinExistence type="inferred from homology"/>
<name>MSRA1_STAAS</name>
<sequence>MNINTAYFAGGCFWCMTKPFDTFDGIEKVTSGYMGGHIENPTYEQVKSGTSGHLETVEIQYDVALFSYNKLLEIFFSVIDPLDTGGQYQDRGPQYQTAIFYTNDHQKELAETYIEQLKNTINADKAIATKILPASQFYKAEDYHQDFYKKNPERYAEEQKIRQEYKNKQ</sequence>
<gene>
    <name evidence="1" type="primary">msrA1</name>
    <name type="ordered locus">SAS1301</name>
</gene>
<feature type="chain" id="PRO_0000138587" description="Peptide methionine sulfoxide reductase MsrA 1">
    <location>
        <begin position="1"/>
        <end position="169"/>
    </location>
</feature>
<feature type="active site" evidence="1">
    <location>
        <position position="12"/>
    </location>
</feature>
<reference key="1">
    <citation type="journal article" date="2004" name="Proc. Natl. Acad. Sci. U.S.A.">
        <title>Complete genomes of two clinical Staphylococcus aureus strains: evidence for the rapid evolution of virulence and drug resistance.</title>
        <authorList>
            <person name="Holden M.T.G."/>
            <person name="Feil E.J."/>
            <person name="Lindsay J.A."/>
            <person name="Peacock S.J."/>
            <person name="Day N.P.J."/>
            <person name="Enright M.C."/>
            <person name="Foster T.J."/>
            <person name="Moore C.E."/>
            <person name="Hurst L."/>
            <person name="Atkin R."/>
            <person name="Barron A."/>
            <person name="Bason N."/>
            <person name="Bentley S.D."/>
            <person name="Chillingworth C."/>
            <person name="Chillingworth T."/>
            <person name="Churcher C."/>
            <person name="Clark L."/>
            <person name="Corton C."/>
            <person name="Cronin A."/>
            <person name="Doggett J."/>
            <person name="Dowd L."/>
            <person name="Feltwell T."/>
            <person name="Hance Z."/>
            <person name="Harris B."/>
            <person name="Hauser H."/>
            <person name="Holroyd S."/>
            <person name="Jagels K."/>
            <person name="James K.D."/>
            <person name="Lennard N."/>
            <person name="Line A."/>
            <person name="Mayes R."/>
            <person name="Moule S."/>
            <person name="Mungall K."/>
            <person name="Ormond D."/>
            <person name="Quail M.A."/>
            <person name="Rabbinowitsch E."/>
            <person name="Rutherford K.M."/>
            <person name="Sanders M."/>
            <person name="Sharp S."/>
            <person name="Simmonds M."/>
            <person name="Stevens K."/>
            <person name="Whitehead S."/>
            <person name="Barrell B.G."/>
            <person name="Spratt B.G."/>
            <person name="Parkhill J."/>
        </authorList>
    </citation>
    <scope>NUCLEOTIDE SEQUENCE [LARGE SCALE GENOMIC DNA]</scope>
    <source>
        <strain>MSSA476</strain>
    </source>
</reference>
<protein>
    <recommendedName>
        <fullName evidence="1">Peptide methionine sulfoxide reductase MsrA 1</fullName>
        <shortName evidence="1">Protein-methionine-S-oxide reductase 1</shortName>
        <ecNumber evidence="1">1.8.4.11</ecNumber>
    </recommendedName>
    <alternativeName>
        <fullName evidence="1">Peptide-methionine (S)-S-oxide reductase 1</fullName>
        <shortName evidence="1">Peptide Met(O) reductase 1</shortName>
    </alternativeName>
</protein>
<organism>
    <name type="scientific">Staphylococcus aureus (strain MSSA476)</name>
    <dbReference type="NCBI Taxonomy" id="282459"/>
    <lineage>
        <taxon>Bacteria</taxon>
        <taxon>Bacillati</taxon>
        <taxon>Bacillota</taxon>
        <taxon>Bacilli</taxon>
        <taxon>Bacillales</taxon>
        <taxon>Staphylococcaceae</taxon>
        <taxon>Staphylococcus</taxon>
    </lineage>
</organism>
<dbReference type="EC" id="1.8.4.11" evidence="1"/>
<dbReference type="EMBL" id="BX571857">
    <property type="protein sequence ID" value="CAG43078.1"/>
    <property type="molecule type" value="Genomic_DNA"/>
</dbReference>
<dbReference type="SMR" id="Q6G9J8"/>
<dbReference type="KEGG" id="sas:SAS1301"/>
<dbReference type="HOGENOM" id="CLU_031040_10_1_9"/>
<dbReference type="GO" id="GO:0033744">
    <property type="term" value="F:L-methionine:thioredoxin-disulfide S-oxidoreductase activity"/>
    <property type="evidence" value="ECO:0007669"/>
    <property type="project" value="RHEA"/>
</dbReference>
<dbReference type="GO" id="GO:0008113">
    <property type="term" value="F:peptide-methionine (S)-S-oxide reductase activity"/>
    <property type="evidence" value="ECO:0007669"/>
    <property type="project" value="UniProtKB-UniRule"/>
</dbReference>
<dbReference type="GO" id="GO:0036211">
    <property type="term" value="P:protein modification process"/>
    <property type="evidence" value="ECO:0007669"/>
    <property type="project" value="UniProtKB-UniRule"/>
</dbReference>
<dbReference type="FunFam" id="3.30.1060.10:FF:000003">
    <property type="entry name" value="Peptide methionine sulfoxide reductase MsrA"/>
    <property type="match status" value="1"/>
</dbReference>
<dbReference type="Gene3D" id="3.30.1060.10">
    <property type="entry name" value="Peptide methionine sulphoxide reductase MsrA"/>
    <property type="match status" value="1"/>
</dbReference>
<dbReference type="HAMAP" id="MF_01401">
    <property type="entry name" value="MsrA"/>
    <property type="match status" value="1"/>
</dbReference>
<dbReference type="InterPro" id="IPR002569">
    <property type="entry name" value="Met_Sox_Rdtase_MsrA_dom"/>
</dbReference>
<dbReference type="InterPro" id="IPR036509">
    <property type="entry name" value="Met_Sox_Rdtase_MsrA_sf"/>
</dbReference>
<dbReference type="NCBIfam" id="TIGR00401">
    <property type="entry name" value="msrA"/>
    <property type="match status" value="1"/>
</dbReference>
<dbReference type="PANTHER" id="PTHR43774">
    <property type="entry name" value="PEPTIDE METHIONINE SULFOXIDE REDUCTASE"/>
    <property type="match status" value="1"/>
</dbReference>
<dbReference type="PANTHER" id="PTHR43774:SF1">
    <property type="entry name" value="PEPTIDE METHIONINE SULFOXIDE REDUCTASE MSRA 2"/>
    <property type="match status" value="1"/>
</dbReference>
<dbReference type="Pfam" id="PF01625">
    <property type="entry name" value="PMSR"/>
    <property type="match status" value="1"/>
</dbReference>
<dbReference type="SUPFAM" id="SSF55068">
    <property type="entry name" value="Peptide methionine sulfoxide reductase"/>
    <property type="match status" value="1"/>
</dbReference>
<accession>Q6G9J8</accession>
<evidence type="ECO:0000255" key="1">
    <source>
        <dbReference type="HAMAP-Rule" id="MF_01401"/>
    </source>
</evidence>
<keyword id="KW-0560">Oxidoreductase</keyword>